<reference key="1">
    <citation type="journal article" date="1999" name="Syst. Biol.">
        <title>Molecular phylogeny of the marmots (Rodentia: Sciuridae): tests of evolutionary and biogeographic hypotheses.</title>
        <authorList>
            <person name="Steppan S.J."/>
            <person name="Akhverdyan M.R."/>
            <person name="Lyapunova E.A."/>
            <person name="Fraser D.G."/>
            <person name="Vorontsov N.N."/>
            <person name="Hoffmann R.S."/>
            <person name="Braun M.J."/>
        </authorList>
    </citation>
    <scope>NUCLEOTIDE SEQUENCE [GENOMIC DNA]</scope>
    <source>
        <strain>Isolate IDB_23765</strain>
        <strain>Isolate IDB_23803</strain>
    </source>
</reference>
<reference key="2">
    <citation type="journal article" date="1999" name="J. Zool. Syst. Evol. Res.">
        <title>Marmot phylogeny revisited: molecular evidence for a diphyletic origin of sociality.</title>
        <authorList>
            <person name="Kruckenhauser L."/>
            <person name="Pinsker W."/>
            <person name="Haring E."/>
            <person name="Arnold W."/>
        </authorList>
    </citation>
    <scope>NUCLEOTIDE SEQUENCE [GENOMIC DNA]</scope>
</reference>
<accession>Q9TH45</accession>
<accession>Q9TH44</accession>
<accession>Q9XP33</accession>
<gene>
    <name type="primary">MT-CYB</name>
    <name type="synonym">COB</name>
    <name type="synonym">CYTB</name>
    <name type="synonym">MTCYB</name>
</gene>
<evidence type="ECO:0000250" key="1"/>
<evidence type="ECO:0000250" key="2">
    <source>
        <dbReference type="UniProtKB" id="P00157"/>
    </source>
</evidence>
<evidence type="ECO:0000255" key="3">
    <source>
        <dbReference type="PROSITE-ProRule" id="PRU00967"/>
    </source>
</evidence>
<evidence type="ECO:0000255" key="4">
    <source>
        <dbReference type="PROSITE-ProRule" id="PRU00968"/>
    </source>
</evidence>
<evidence type="ECO:0000305" key="5"/>
<geneLocation type="mitochondrion"/>
<name>CYB_MARBB</name>
<protein>
    <recommendedName>
        <fullName>Cytochrome b</fullName>
    </recommendedName>
    <alternativeName>
        <fullName>Complex III subunit 3</fullName>
    </alternativeName>
    <alternativeName>
        <fullName>Complex III subunit III</fullName>
    </alternativeName>
    <alternativeName>
        <fullName>Cytochrome b-c1 complex subunit 3</fullName>
    </alternativeName>
    <alternativeName>
        <fullName>Ubiquinol-cytochrome-c reductase complex cytochrome b subunit</fullName>
    </alternativeName>
</protein>
<proteinExistence type="inferred from homology"/>
<keyword id="KW-0249">Electron transport</keyword>
<keyword id="KW-0349">Heme</keyword>
<keyword id="KW-0408">Iron</keyword>
<keyword id="KW-0472">Membrane</keyword>
<keyword id="KW-0479">Metal-binding</keyword>
<keyword id="KW-0496">Mitochondrion</keyword>
<keyword id="KW-0999">Mitochondrion inner membrane</keyword>
<keyword id="KW-0679">Respiratory chain</keyword>
<keyword id="KW-0812">Transmembrane</keyword>
<keyword id="KW-1133">Transmembrane helix</keyword>
<keyword id="KW-0813">Transport</keyword>
<keyword id="KW-0830">Ubiquinone</keyword>
<dbReference type="EMBL" id="AF143916">
    <property type="protein sequence ID" value="AAD29723.1"/>
    <property type="molecule type" value="Genomic_DNA"/>
</dbReference>
<dbReference type="EMBL" id="AF143917">
    <property type="protein sequence ID" value="AAD29724.1"/>
    <property type="molecule type" value="Genomic_DNA"/>
</dbReference>
<dbReference type="EMBL" id="AF100712">
    <property type="protein sequence ID" value="AAD45203.1"/>
    <property type="molecule type" value="Genomic_DNA"/>
</dbReference>
<dbReference type="GO" id="GO:0005743">
    <property type="term" value="C:mitochondrial inner membrane"/>
    <property type="evidence" value="ECO:0007669"/>
    <property type="project" value="UniProtKB-SubCell"/>
</dbReference>
<dbReference type="GO" id="GO:0045275">
    <property type="term" value="C:respiratory chain complex III"/>
    <property type="evidence" value="ECO:0007669"/>
    <property type="project" value="InterPro"/>
</dbReference>
<dbReference type="GO" id="GO:0046872">
    <property type="term" value="F:metal ion binding"/>
    <property type="evidence" value="ECO:0007669"/>
    <property type="project" value="UniProtKB-KW"/>
</dbReference>
<dbReference type="GO" id="GO:0008121">
    <property type="term" value="F:ubiquinol-cytochrome-c reductase activity"/>
    <property type="evidence" value="ECO:0007669"/>
    <property type="project" value="InterPro"/>
</dbReference>
<dbReference type="GO" id="GO:0006122">
    <property type="term" value="P:mitochondrial electron transport, ubiquinol to cytochrome c"/>
    <property type="evidence" value="ECO:0007669"/>
    <property type="project" value="TreeGrafter"/>
</dbReference>
<dbReference type="CDD" id="cd00290">
    <property type="entry name" value="cytochrome_b_C"/>
    <property type="match status" value="1"/>
</dbReference>
<dbReference type="CDD" id="cd00284">
    <property type="entry name" value="Cytochrome_b_N"/>
    <property type="match status" value="1"/>
</dbReference>
<dbReference type="FunFam" id="1.20.810.10:FF:000002">
    <property type="entry name" value="Cytochrome b"/>
    <property type="match status" value="1"/>
</dbReference>
<dbReference type="Gene3D" id="1.20.810.10">
    <property type="entry name" value="Cytochrome Bc1 Complex, Chain C"/>
    <property type="match status" value="1"/>
</dbReference>
<dbReference type="InterPro" id="IPR005798">
    <property type="entry name" value="Cyt_b/b6_C"/>
</dbReference>
<dbReference type="InterPro" id="IPR036150">
    <property type="entry name" value="Cyt_b/b6_C_sf"/>
</dbReference>
<dbReference type="InterPro" id="IPR005797">
    <property type="entry name" value="Cyt_b/b6_N"/>
</dbReference>
<dbReference type="InterPro" id="IPR027387">
    <property type="entry name" value="Cytb/b6-like_sf"/>
</dbReference>
<dbReference type="InterPro" id="IPR030689">
    <property type="entry name" value="Cytochrome_b"/>
</dbReference>
<dbReference type="InterPro" id="IPR048260">
    <property type="entry name" value="Cytochrome_b_C_euk/bac"/>
</dbReference>
<dbReference type="InterPro" id="IPR048259">
    <property type="entry name" value="Cytochrome_b_N_euk/bac"/>
</dbReference>
<dbReference type="InterPro" id="IPR016174">
    <property type="entry name" value="Di-haem_cyt_TM"/>
</dbReference>
<dbReference type="PANTHER" id="PTHR19271">
    <property type="entry name" value="CYTOCHROME B"/>
    <property type="match status" value="1"/>
</dbReference>
<dbReference type="PANTHER" id="PTHR19271:SF16">
    <property type="entry name" value="CYTOCHROME B"/>
    <property type="match status" value="1"/>
</dbReference>
<dbReference type="Pfam" id="PF00032">
    <property type="entry name" value="Cytochrom_B_C"/>
    <property type="match status" value="1"/>
</dbReference>
<dbReference type="Pfam" id="PF00033">
    <property type="entry name" value="Cytochrome_B"/>
    <property type="match status" value="1"/>
</dbReference>
<dbReference type="PIRSF" id="PIRSF038885">
    <property type="entry name" value="COB"/>
    <property type="match status" value="1"/>
</dbReference>
<dbReference type="SUPFAM" id="SSF81648">
    <property type="entry name" value="a domain/subunit of cytochrome bc1 complex (Ubiquinol-cytochrome c reductase)"/>
    <property type="match status" value="1"/>
</dbReference>
<dbReference type="SUPFAM" id="SSF81342">
    <property type="entry name" value="Transmembrane di-heme cytochromes"/>
    <property type="match status" value="1"/>
</dbReference>
<dbReference type="PROSITE" id="PS51003">
    <property type="entry name" value="CYTB_CTER"/>
    <property type="match status" value="1"/>
</dbReference>
<dbReference type="PROSITE" id="PS51002">
    <property type="entry name" value="CYTB_NTER"/>
    <property type="match status" value="1"/>
</dbReference>
<organism>
    <name type="scientific">Marmota bobak</name>
    <name type="common">Bobak marmot</name>
    <dbReference type="NCBI Taxonomy" id="93158"/>
    <lineage>
        <taxon>Eukaryota</taxon>
        <taxon>Metazoa</taxon>
        <taxon>Chordata</taxon>
        <taxon>Craniata</taxon>
        <taxon>Vertebrata</taxon>
        <taxon>Euteleostomi</taxon>
        <taxon>Mammalia</taxon>
        <taxon>Eutheria</taxon>
        <taxon>Euarchontoglires</taxon>
        <taxon>Glires</taxon>
        <taxon>Rodentia</taxon>
        <taxon>Sciuromorpha</taxon>
        <taxon>Sciuridae</taxon>
        <taxon>Xerinae</taxon>
        <taxon>Marmotini</taxon>
        <taxon>Marmota</taxon>
    </lineage>
</organism>
<comment type="function">
    <text evidence="2">Component of the ubiquinol-cytochrome c reductase complex (complex III or cytochrome b-c1 complex) that is part of the mitochondrial respiratory chain. The b-c1 complex mediates electron transfer from ubiquinol to cytochrome c. Contributes to the generation of a proton gradient across the mitochondrial membrane that is then used for ATP synthesis.</text>
</comment>
<comment type="cofactor">
    <cofactor evidence="2">
        <name>heme b</name>
        <dbReference type="ChEBI" id="CHEBI:60344"/>
    </cofactor>
    <text evidence="2">Binds 2 heme b groups non-covalently.</text>
</comment>
<comment type="subunit">
    <text evidence="2">The cytochrome bc1 complex contains 11 subunits: 3 respiratory subunits (MT-CYB, CYC1 and UQCRFS1), 2 core proteins (UQCRC1 and UQCRC2) and 6 low-molecular weight proteins (UQCRH/QCR6, UQCRB/QCR7, UQCRQ/QCR8, UQCR10/QCR9, UQCR11/QCR10 and a cleavage product of UQCRFS1). This cytochrome bc1 complex then forms a dimer.</text>
</comment>
<comment type="subcellular location">
    <subcellularLocation>
        <location evidence="2">Mitochondrion inner membrane</location>
        <topology evidence="2">Multi-pass membrane protein</topology>
    </subcellularLocation>
</comment>
<comment type="miscellaneous">
    <text evidence="1">Heme 1 (or BL or b562) is low-potential and absorbs at about 562 nm, and heme 2 (or BH or b566) is high-potential and absorbs at about 566 nm.</text>
</comment>
<comment type="similarity">
    <text evidence="3 4">Belongs to the cytochrome b family.</text>
</comment>
<comment type="caution">
    <text evidence="2">The full-length protein contains only eight transmembrane helices, not nine as predicted by bioinformatics tools.</text>
</comment>
<feature type="chain" id="PRO_0000061153" description="Cytochrome b">
    <location>
        <begin position="1"/>
        <end position="379"/>
    </location>
</feature>
<feature type="transmembrane region" description="Helical" evidence="2">
    <location>
        <begin position="33"/>
        <end position="53"/>
    </location>
</feature>
<feature type="transmembrane region" description="Helical" evidence="2">
    <location>
        <begin position="77"/>
        <end position="98"/>
    </location>
</feature>
<feature type="transmembrane region" description="Helical" evidence="2">
    <location>
        <begin position="113"/>
        <end position="133"/>
    </location>
</feature>
<feature type="transmembrane region" description="Helical" evidence="2">
    <location>
        <begin position="178"/>
        <end position="198"/>
    </location>
</feature>
<feature type="transmembrane region" description="Helical" evidence="2">
    <location>
        <begin position="226"/>
        <end position="246"/>
    </location>
</feature>
<feature type="transmembrane region" description="Helical" evidence="2">
    <location>
        <begin position="288"/>
        <end position="308"/>
    </location>
</feature>
<feature type="transmembrane region" description="Helical" evidence="2">
    <location>
        <begin position="320"/>
        <end position="340"/>
    </location>
</feature>
<feature type="transmembrane region" description="Helical" evidence="2">
    <location>
        <begin position="347"/>
        <end position="367"/>
    </location>
</feature>
<feature type="binding site" description="axial binding residue" evidence="2">
    <location>
        <position position="83"/>
    </location>
    <ligand>
        <name>heme b</name>
        <dbReference type="ChEBI" id="CHEBI:60344"/>
        <label>b562</label>
    </ligand>
    <ligandPart>
        <name>Fe</name>
        <dbReference type="ChEBI" id="CHEBI:18248"/>
    </ligandPart>
</feature>
<feature type="binding site" description="axial binding residue" evidence="2">
    <location>
        <position position="97"/>
    </location>
    <ligand>
        <name>heme b</name>
        <dbReference type="ChEBI" id="CHEBI:60344"/>
        <label>b566</label>
    </ligand>
    <ligandPart>
        <name>Fe</name>
        <dbReference type="ChEBI" id="CHEBI:18248"/>
    </ligandPart>
</feature>
<feature type="binding site" description="axial binding residue" evidence="2">
    <location>
        <position position="182"/>
    </location>
    <ligand>
        <name>heme b</name>
        <dbReference type="ChEBI" id="CHEBI:60344"/>
        <label>b562</label>
    </ligand>
    <ligandPart>
        <name>Fe</name>
        <dbReference type="ChEBI" id="CHEBI:18248"/>
    </ligandPart>
</feature>
<feature type="binding site" description="axial binding residue" evidence="2">
    <location>
        <position position="196"/>
    </location>
    <ligand>
        <name>heme b</name>
        <dbReference type="ChEBI" id="CHEBI:60344"/>
        <label>b566</label>
    </ligand>
    <ligandPart>
        <name>Fe</name>
        <dbReference type="ChEBI" id="CHEBI:18248"/>
    </ligandPart>
</feature>
<feature type="binding site" evidence="2">
    <location>
        <position position="201"/>
    </location>
    <ligand>
        <name>a ubiquinone</name>
        <dbReference type="ChEBI" id="CHEBI:16389"/>
    </ligand>
</feature>
<feature type="sequence variant" description="In strain: Isolate IDB_23765.">
    <original>TM</original>
    <variation>AI</variation>
    <location>
        <begin position="42"/>
        <end position="43"/>
    </location>
</feature>
<feature type="sequence variant" description="In strain: Isolate IDB_23765.">
    <original>K</original>
    <variation>N</variation>
    <location>
        <position position="148"/>
    </location>
</feature>
<feature type="sequence variant" description="In strain: Isolate IDB_23765.">
    <original>M</original>
    <variation>V</variation>
    <location>
        <position position="240"/>
    </location>
</feature>
<feature type="sequence conflict" description="In Ref. 2; AAD45203." evidence="5" ref="2">
    <original>Q</original>
    <variation>R</variation>
    <location>
        <position position="312"/>
    </location>
</feature>
<sequence length="379" mass="42886">MTNTRKTHPLIKIINHSFIDLPAPSNISAWWNFGSLLGLCLTMQILTGLFLAMHYTSDTLTAFSSITHICRDVNYGWLIRYAHANGASMFFICLFLHVGRGVYYGSYTYFETWNIGVILLFMVMATAFMGYVLPWGQMSXWGATVITKLLSAIPYIGTTLVEWIWGGFSVDKATLTRFFAFHFILPFIIAALAMVHLLFLHETGSNNPSGLISDSDKIPFHPYYTIKDTLGVLLLILILMILVLFSPDLLGDPDNYTPANPLSTPPHIKPEWYFLFAYAILRSIPNKLGGVLALVFSILILMLFPLLHLSKQRSMMFRPLSQCMFWILVADLITLTWIGGQPVEYPYTIIGQLASILYFAIILLILPIISLIENKLLKW</sequence>